<comment type="function">
    <text evidence="1 2 3 5 6 7 8 9">Catalytic subunit of the glycosylphosphatidylinositol-anchor (GPI-anchor) transamidase (GPI-T) complex that catalyzes the formation of the linkage between a proprotein and a GPI-anchor and participates in GPI anchored protein biosynthesis (PubMed:10793132, PubMed:11483512, PubMed:12582175, PubMed:34576938, PubMed:35165458, PubMed:35551457, PubMed:37684232, PubMed:9356492). Recognizes diverse proproteins at a C-terminal signal peptide (CSP) region that lacks consensus sequence and replaces it with a GPI-anchor via a transamidation reaction (PubMed:35165458, PubMed:35551457, PubMed:37684232). Transamidation catalysis reaction follows a two-phase mechanism (PubMed:37684232). In the acyl-enzyme phase, the carbonyl group of the proproteins's omega-site undergoes a nucleophilic attack forming an enzyme-substrate thioester bond (PubMed:37684232). Followed by a general acid catalysis that allows CSP releasing, regenerating the carbonyl, and forming the acyl-enzyme intermediate (PubMed:37684232). In the GPI-anchor attachment phase, the amino group of the GPI-anchor's ethanolamine phosphate, the one on third mannose (EtNP3), mediates a nucleophilic attack on the carbonyl of the acyl-enzyme intermediate, replacing the CSP, allowing GPI-anchor attachment to the omega-residue, therefore forming the product and freeing the enzyme (PubMed:37684232).</text>
</comment>
<comment type="activity regulation">
    <text evidence="8">In the absence of proproteins substrates, exists in an inactive state with a disrupted catalytic site by an autoinhibitory loop (PubMed:37684232). The binding of proprotein substrates, particularly the CSP region, to GPI-T triggers concerted conformational changes that alleviate the inhibition by the autoinhibitory loop (PubMed:37684232). Meanwhile, proprotein residues near the omega- site induce the formation of a catalytic cleft for catalysis, following which the products are released and GPI-T reverts to the inactive state (PubMed:37684232).</text>
</comment>
<comment type="pathway">
    <text evidence="1 2 3 6 7 9">Glycolipid biosynthesis; glycosylphosphatidylinositol-anchor biosynthesis.</text>
</comment>
<comment type="subunit">
    <text evidence="1 2 3 5 6 7">Heteropentamer (PubMed:35551457). Part of the GPI-anchor transamidase complex, consisting of PIGK, PIGT, PIGS, PIGU and GAA1 (PubMed:10793132, PubMed:11483512, PubMed:12582175, PubMed:34576938, PubMed:35165458, PubMed:35551457). Interacts with GPAA1 (PubMed:10793132). Interacts with PIGT; this interaction, via a disulfide link, stabilizes the expression of GAA1 and PIGK and links them to PIGS (PubMed:11483512, PubMed:12582175).</text>
</comment>
<comment type="interaction">
    <interactant intactId="EBI-8617711">
        <id>Q92643</id>
    </interactant>
    <interactant intactId="EBI-720225">
        <id>O43292</id>
        <label>GPAA1</label>
    </interactant>
    <organismsDiffer>false</organismsDiffer>
    <experiments>13</experiments>
</comment>
<comment type="interaction">
    <interactant intactId="EBI-8617711">
        <id>Q92643</id>
    </interactant>
    <interactant intactId="EBI-726383">
        <id>Q969N2</id>
        <label>PIGT</label>
    </interactant>
    <organismsDiffer>false</organismsDiffer>
    <experiments>12</experiments>
</comment>
<comment type="subcellular location">
    <subcellularLocation>
        <location evidence="2">Endoplasmic reticulum membrane</location>
        <topology evidence="6 7">Single-pass type I membrane protein</topology>
    </subcellularLocation>
</comment>
<comment type="alternative products">
    <event type="alternative splicing"/>
    <isoform>
        <id>Q92643-1</id>
        <name>1</name>
        <sequence type="displayed"/>
    </isoform>
    <isoform>
        <id>Q92643-2</id>
        <name>2</name>
        <sequence type="described" ref="VSP_056457"/>
    </isoform>
</comment>
<comment type="PTM">
    <text evidence="3 7">The disulfide bond between PIGK/GPI8 and PIGT is important for normal enzyme activity.</text>
</comment>
<comment type="disease" evidence="4">
    <disease id="DI-05837">
        <name>Neurodevelopmental disorder with hypotonia and cerebellar atrophy, with or without seizures</name>
        <acronym>NEDHCAS</acronym>
        <description>An autosomal recessive neurodevelopmental disorder characterized by global developmental delay, intellectual disability, hypotonia, cerebellar ataxia, cerebellar atrophy, delayed motor skills, poor or absent speech, and epilepsy in most patients. Some patients manifest facial dysmorphism. Disease onset is in infancy.</description>
        <dbReference type="MIM" id="618879"/>
    </disease>
    <text>The disease is caused by variants affecting the gene represented in this entry.</text>
</comment>
<comment type="similarity">
    <text evidence="12">Belongs to the peptidase C13 family.</text>
</comment>
<feature type="signal peptide" evidence="2 24">
    <location>
        <begin position="1"/>
        <end position="27"/>
    </location>
</feature>
<feature type="chain" id="PRO_0000026529" description="GPI-anchor transamidase">
    <location>
        <begin position="28"/>
        <end position="395"/>
    </location>
</feature>
<feature type="topological domain" description="Lumenal" evidence="14">
    <location>
        <begin position="28"/>
        <end position="368"/>
    </location>
</feature>
<feature type="transmembrane region" description="Helical" evidence="6 7 17 18">
    <location>
        <begin position="369"/>
        <end position="385"/>
    </location>
</feature>
<feature type="topological domain" description="Cytoplasmic" evidence="14">
    <location>
        <begin position="386"/>
        <end position="395"/>
    </location>
</feature>
<feature type="region of interest" description="Autoinhibitory loop" evidence="8">
    <location>
        <begin position="231"/>
        <end position="236"/>
    </location>
</feature>
<feature type="active site" description="Proton donor" evidence="13 15">
    <location>
        <position position="164"/>
    </location>
</feature>
<feature type="active site" description="Nucleophile; acyl-thioester intermediate" evidence="13 15">
    <location>
        <position position="206"/>
    </location>
</feature>
<feature type="binding site" evidence="6 7 8 17 18 22 23">
    <location>
        <position position="79"/>
    </location>
    <ligand>
        <name>Ca(2+)</name>
        <dbReference type="ChEBI" id="CHEBI:29108"/>
    </ligand>
</feature>
<feature type="binding site" evidence="6 7 8 17 18 22 23">
    <location>
        <position position="82"/>
    </location>
    <ligand>
        <name>Ca(2+)</name>
        <dbReference type="ChEBI" id="CHEBI:29108"/>
    </ligand>
</feature>
<feature type="binding site" evidence="8 22 23">
    <location>
        <position position="118"/>
    </location>
    <ligand>
        <name>Ca(2+)</name>
        <dbReference type="ChEBI" id="CHEBI:29108"/>
    </ligand>
</feature>
<feature type="binding site" evidence="6 7 8 17 18 22 23">
    <location>
        <position position="120"/>
    </location>
    <ligand>
        <name>Ca(2+)</name>
        <dbReference type="ChEBI" id="CHEBI:29108"/>
    </ligand>
</feature>
<feature type="binding site" evidence="8 19">
    <location>
        <position position="206"/>
    </location>
    <ligand>
        <name>a protein</name>
        <dbReference type="ChEBI" id="CHEBI:16541"/>
    </ligand>
    <ligandPart>
        <name>GPI-anchor amidated serine</name>
    </ligandPart>
</feature>
<feature type="binding site" evidence="8 19">
    <location>
        <position position="232"/>
    </location>
    <ligand>
        <name>a protein</name>
        <dbReference type="ChEBI" id="CHEBI:16541"/>
    </ligand>
    <ligandPart>
        <name>GPI-anchor amidated serine</name>
    </ligandPart>
</feature>
<feature type="binding site" evidence="8 19">
    <location>
        <position position="234"/>
    </location>
    <ligand>
        <name>a protein</name>
        <dbReference type="ChEBI" id="CHEBI:16541"/>
    </ligand>
    <ligandPart>
        <name>L-serine residue</name>
        <dbReference type="ChEBI" id="CHEBI:29999"/>
    </ligandPart>
</feature>
<feature type="disulfide bond" description="Interchain (with C-182 in PIGT)" evidence="3 6 7 8 20 21 22 23">
    <location>
        <position position="92"/>
    </location>
</feature>
<feature type="disulfide bond" evidence="6 8 20 22 23">
    <location>
        <begin position="275"/>
        <end position="280"/>
    </location>
</feature>
<feature type="splice variant" id="VSP_056457" description="In isoform 2." evidence="10">
    <location>
        <begin position="50"/>
        <end position="125"/>
    </location>
</feature>
<feature type="sequence variant" id="VAR_051518" description="In dbSNP:rs12723684.">
    <original>T</original>
    <variation>A</variation>
    <location>
        <position position="16"/>
    </location>
</feature>
<feature type="sequence variant" id="VAR_084273" description="In NEDHCAS." evidence="4">
    <location>
        <begin position="33"/>
        <end position="395"/>
    </location>
</feature>
<feature type="sequence variant" id="VAR_084274" description="In NEDHCAS; dbSNP:rs1656295216." evidence="4">
    <original>S</original>
    <variation>F</variation>
    <location>
        <position position="53"/>
    </location>
</feature>
<feature type="sequence variant" id="VAR_084275" description="In NEDHCAS; uncertain significance." evidence="4">
    <original>L</original>
    <variation>P</variation>
    <location>
        <position position="86"/>
    </location>
</feature>
<feature type="sequence variant" id="VAR_084276" description="In NEDHCAS; dbSNP:rs772948495." evidence="4">
    <original>A</original>
    <variation>V</variation>
    <location>
        <position position="87"/>
    </location>
</feature>
<feature type="sequence variant" id="VAR_084277" description="In NEDHCAS; dbSNP:rs771836178." evidence="4">
    <original>D</original>
    <variation>N</variation>
    <location>
        <position position="88"/>
    </location>
</feature>
<feature type="sequence variant" id="VAR_084278" description="In NEDHCAS; dbSNP:rs1164656857." evidence="4">
    <original>Y</original>
    <variation>S</variation>
    <location>
        <position position="160"/>
    </location>
</feature>
<feature type="sequence variant" id="VAR_084279" description="In NEDHCAS; uncertain significance; dbSNP:rs780683566." evidence="4">
    <original>A</original>
    <variation>V</variation>
    <location>
        <position position="184"/>
    </location>
</feature>
<feature type="sequence variant" id="VAR_084280" description="In NEDHCAS; uncertain significance; dbSNP:rs751082508." evidence="4">
    <original>M</original>
    <variation>K</variation>
    <location>
        <position position="246"/>
    </location>
</feature>
<feature type="sequence variant" id="VAR_084281" description="In NEDHCAS; dbSNP:rs1654968072." evidence="4">
    <original>C</original>
    <variation>R</variation>
    <location>
        <position position="275"/>
    </location>
</feature>
<feature type="mutagenesis site" description="No effect on function in GPI-anchor attachment to protein." evidence="5">
    <original>R</original>
    <variation>A</variation>
    <location>
        <position position="54"/>
    </location>
</feature>
<feature type="mutagenesis site" description="Decreased function in GPI-anchor attachment to protein. Substantially decreases GPI-anchor transamidase activity." evidence="5 6">
    <original>N</original>
    <variation>A</variation>
    <location>
        <position position="58"/>
    </location>
</feature>
<feature type="mutagenesis site" description="Decreased function in GPI-anchor attachment to protein. Reduces by 25% the GPI-anchor transamidase activity." evidence="5 7">
    <original>R</original>
    <variation>A</variation>
    <location>
        <position position="60"/>
    </location>
</feature>
<feature type="mutagenesis site" description="Reduces by 90% the GPI-anchor transamidase activity." evidence="7">
    <original>R</original>
    <variation>E</variation>
    <location>
        <position position="60"/>
    </location>
</feature>
<feature type="mutagenesis site" description="Reduces by 60% the GPI-anchor transamidase activity." evidence="7">
    <original>R</original>
    <variation>K</variation>
    <location>
        <position position="60"/>
    </location>
</feature>
<feature type="mutagenesis site" description="Reduces by 40% the GPI-anchor transamidase activity." evidence="7">
    <original>R</original>
    <variation>L</variation>
    <location>
        <position position="60"/>
    </location>
</feature>
<feature type="mutagenesis site" description="Decreased function in GPI-anchor attachment to protein." evidence="5">
    <original>H</original>
    <variation>A</variation>
    <location>
        <position position="61"/>
    </location>
</feature>
<feature type="mutagenesis site" description="No effect on function in GPI-anchor attachment to protein." evidence="5">
    <original>R</original>
    <variation>A</variation>
    <location>
        <position position="74"/>
    </location>
</feature>
<feature type="mutagenesis site" description="No effect on function in GPI-anchor attachment to protein." evidence="5">
    <original>D</original>
    <variation>A</variation>
    <location>
        <position position="79"/>
    </location>
</feature>
<feature type="mutagenesis site" description="Decreased function in GPI-anchor attachment to protein. Decreases GPI-anchor transamidase activity by approximately 40%." evidence="1 3 7">
    <original>C</original>
    <variation>A</variation>
    <location>
        <position position="92"/>
    </location>
</feature>
<feature type="mutagenesis site" description="Decreased function in GPI-anchor attachment to protein." evidence="1 3 5">
    <original>C</original>
    <variation>S</variation>
    <location>
        <position position="92"/>
    </location>
</feature>
<feature type="mutagenesis site" description="No effect on function in GPI-anchor attachment to protein." evidence="5">
    <original>E</original>
    <variation>A</variation>
    <location>
        <position position="118"/>
    </location>
</feature>
<feature type="mutagenesis site" description="Does not affect GPI-anchor transamidase activity." evidence="6">
    <original>D</original>
    <variation>N</variation>
    <location>
        <position position="120"/>
    </location>
</feature>
<feature type="mutagenesis site" description="No effect on function in GPI-anchor attachment to protein." evidence="5">
    <original>E</original>
    <variation>A</variation>
    <location>
        <position position="125"/>
    </location>
</feature>
<feature type="mutagenesis site" description="No effect on function in GPI-anchor attachment to protein." evidence="5">
    <original>E</original>
    <variation>A</variation>
    <location>
        <position position="129"/>
    </location>
</feature>
<feature type="mutagenesis site" description="No effect on function in GPI-anchor attachment to protein." evidence="5">
    <original>Y</original>
    <variation>A</variation>
    <location>
        <position position="160"/>
    </location>
</feature>
<feature type="mutagenesis site" description="Loss of function in GPI-anchor attachment to protein. Abolishes GPI-anchor transamidase activity." evidence="1 5 6 7">
    <original>H</original>
    <variation>A</variation>
    <location>
        <position position="164"/>
    </location>
</feature>
<feature type="mutagenesis site" description="No effect on function in GPI-anchor attachment to protein." evidence="5">
    <original>D</original>
    <variation>A</variation>
    <location>
        <position position="174"/>
    </location>
</feature>
<feature type="mutagenesis site" description="No effect on function in GPI-anchor attachment to protein." evidence="5">
    <original>E</original>
    <variation>A</variation>
    <location>
        <position position="198"/>
    </location>
</feature>
<feature type="mutagenesis site" description="Decreased function in GPI-anchor attachment to protein." evidence="5">
    <original>D</original>
    <variation>A</variation>
    <location>
        <position position="204"/>
    </location>
</feature>
<feature type="mutagenesis site" description="Reduces by 60% the GPI-anchor transamidase activity." evidence="7">
    <original>D</original>
    <variation>K</variation>
    <location>
        <position position="204"/>
    </location>
</feature>
<feature type="mutagenesis site" description="Loss of function in GPI-anchor attachment to protein. Abolishes GPI-anchor transamidase activity." evidence="1 6 7">
    <original>C</original>
    <variation>A</variation>
    <location>
        <position position="206"/>
    </location>
</feature>
<feature type="mutagenesis site" description="Loss of function in GPI-anchor attachment to protein." evidence="5">
    <original>C</original>
    <variation>S</variation>
    <location>
        <position position="206"/>
    </location>
</feature>
<feature type="mutagenesis site" description="No effect on function in GPI-anchor attachment to protein." evidence="5">
    <original>E</original>
    <variation>A</variation>
    <location>
        <position position="230"/>
    </location>
</feature>
<feature type="mutagenesis site" description="No effect on function in GPI-anchor attachment to protein." evidence="5">
    <original>D</original>
    <variation>A</variation>
    <location>
        <position position="231"/>
    </location>
</feature>
<feature type="mutagenesis site" description="No effect on function in GPI-anchor attachment to protein." evidence="5">
    <original>S</original>
    <variation>A</variation>
    <location>
        <position position="232"/>
    </location>
</feature>
<feature type="mutagenesis site" description="No effect on function in GPI-anchor attachment to protein." evidence="5">
    <original>D</original>
    <variation>A</variation>
    <location>
        <position position="238"/>
    </location>
</feature>
<feature type="mutagenesis site" description="No effect on function in GPI-anchor attachment to protein." evidence="5">
    <original>H</original>
    <variation>A</variation>
    <location>
        <position position="244"/>
    </location>
</feature>
<feature type="mutagenesis site" description="No effect on function in GPI-anchor attachment to protein." evidence="5">
    <original>D</original>
    <variation>A</variation>
    <location>
        <position position="247"/>
    </location>
</feature>
<feature type="mutagenesis site" description="Almost abolishes the GPI-anchor transamidase activity." evidence="7">
    <original>D</original>
    <variation>K</variation>
    <location>
        <position position="247"/>
    </location>
</feature>
<feature type="mutagenesis site" description="No effect on function in GPI-anchor attachment to protein." evidence="5">
    <original>D</original>
    <variation>A</variation>
    <location>
        <position position="289"/>
    </location>
</feature>
<feature type="mutagenesis site" description="No effect on function in GPI-anchor attachment to protein." evidence="5">
    <original>D</original>
    <variation>A</variation>
    <location>
        <position position="302"/>
    </location>
</feature>
<feature type="mutagenesis site" description="Loss of activity." evidence="1">
    <location>
        <begin position="311"/>
        <end position="395"/>
    </location>
</feature>
<feature type="sequence conflict" description="In Ref. 1; CAA68871." evidence="12" ref="1">
    <original>MAVT</original>
    <variation>SLHEA</variation>
    <location>
        <begin position="1"/>
        <end position="4"/>
    </location>
</feature>
<feature type="strand" evidence="26">
    <location>
        <begin position="44"/>
        <end position="51"/>
    </location>
</feature>
<feature type="turn" evidence="25">
    <location>
        <begin position="55"/>
        <end position="57"/>
    </location>
</feature>
<feature type="helix" evidence="26">
    <location>
        <begin position="59"/>
        <end position="75"/>
    </location>
</feature>
<feature type="helix" evidence="26">
    <location>
        <begin position="79"/>
        <end position="81"/>
    </location>
</feature>
<feature type="strand" evidence="26">
    <location>
        <begin position="82"/>
        <end position="88"/>
    </location>
</feature>
<feature type="strand" evidence="25">
    <location>
        <begin position="91"/>
        <end position="93"/>
    </location>
</feature>
<feature type="strand" evidence="26">
    <location>
        <begin position="103"/>
        <end position="105"/>
    </location>
</feature>
<feature type="strand" evidence="26">
    <location>
        <begin position="111"/>
        <end position="113"/>
    </location>
</feature>
<feature type="strand" evidence="27">
    <location>
        <begin position="120"/>
        <end position="122"/>
    </location>
</feature>
<feature type="helix" evidence="26">
    <location>
        <begin position="123"/>
        <end position="125"/>
    </location>
</feature>
<feature type="helix" evidence="26">
    <location>
        <begin position="128"/>
        <end position="136"/>
    </location>
</feature>
<feature type="helix" evidence="26">
    <location>
        <begin position="145"/>
        <end position="147"/>
    </location>
</feature>
<feature type="strand" evidence="26">
    <location>
        <begin position="155"/>
        <end position="163"/>
    </location>
</feature>
<feature type="strand" evidence="26">
    <location>
        <begin position="169"/>
        <end position="172"/>
    </location>
</feature>
<feature type="turn" evidence="26">
    <location>
        <begin position="173"/>
        <end position="175"/>
    </location>
</feature>
<feature type="strand" evidence="26">
    <location>
        <begin position="176"/>
        <end position="179"/>
    </location>
</feature>
<feature type="helix" evidence="26">
    <location>
        <begin position="180"/>
        <end position="192"/>
    </location>
</feature>
<feature type="strand" evidence="26">
    <location>
        <begin position="197"/>
        <end position="205"/>
    </location>
</feature>
<feature type="helix" evidence="26">
    <location>
        <begin position="208"/>
        <end position="212"/>
    </location>
</feature>
<feature type="strand" evidence="26">
    <location>
        <begin position="217"/>
        <end position="226"/>
    </location>
</feature>
<feature type="strand" evidence="27">
    <location>
        <begin position="234"/>
        <end position="238"/>
    </location>
</feature>
<feature type="turn" evidence="26">
    <location>
        <begin position="239"/>
        <end position="241"/>
    </location>
</feature>
<feature type="strand" evidence="27">
    <location>
        <begin position="243"/>
        <end position="247"/>
    </location>
</feature>
<feature type="helix" evidence="26">
    <location>
        <begin position="248"/>
        <end position="256"/>
    </location>
</feature>
<feature type="strand" evidence="26">
    <location>
        <begin position="257"/>
        <end position="259"/>
    </location>
</feature>
<feature type="turn" evidence="26">
    <location>
        <begin position="269"/>
        <end position="273"/>
    </location>
</feature>
<feature type="turn" evidence="27">
    <location>
        <begin position="277"/>
        <end position="279"/>
    </location>
</feature>
<feature type="strand" evidence="26">
    <location>
        <begin position="280"/>
        <end position="282"/>
    </location>
</feature>
<feature type="strand" evidence="26">
    <location>
        <begin position="285"/>
        <end position="287"/>
    </location>
</feature>
<feature type="helix" evidence="26">
    <location>
        <begin position="295"/>
        <end position="297"/>
    </location>
</feature>
<feature type="helix" evidence="26">
    <location>
        <begin position="301"/>
        <end position="304"/>
    </location>
</feature>
<feature type="helix" evidence="26">
    <location>
        <begin position="351"/>
        <end position="356"/>
    </location>
</feature>
<feature type="helix" evidence="26">
    <location>
        <begin position="368"/>
        <end position="385"/>
    </location>
</feature>
<reference key="1">
    <citation type="journal article" date="1996" name="EMBO J.">
        <title>Yeast Gpi8p is essential for GPI anchor attachment onto proteins.</title>
        <authorList>
            <person name="Benghezal M."/>
            <person name="Benachour A."/>
            <person name="Rusconi S."/>
            <person name="Aebi M."/>
            <person name="Conzelmann A."/>
        </authorList>
    </citation>
    <scope>NUCLEOTIDE SEQUENCE [MRNA] (ISOFORM 1)</scope>
</reference>
<reference key="2">
    <citation type="journal article" date="1997" name="Proc. Natl. Acad. Sci. U.S.A.">
        <title>The affected gene underlying the class K glycosylphosphatidylinositol (GPI) surface protein defect codes for the GPI transamidase.</title>
        <authorList>
            <person name="Yu J."/>
            <person name="Nagarajan S."/>
            <person name="Knez J.J."/>
            <person name="Udenfriend S."/>
            <person name="Chen R."/>
            <person name="Medof M.E."/>
        </authorList>
    </citation>
    <scope>NUCLEOTIDE SEQUENCE [MRNA] (ISOFORM 1)</scope>
    <scope>FUNCTION</scope>
</reference>
<reference key="3">
    <citation type="journal article" date="2004" name="Nat. Genet.">
        <title>Complete sequencing and characterization of 21,243 full-length human cDNAs.</title>
        <authorList>
            <person name="Ota T."/>
            <person name="Suzuki Y."/>
            <person name="Nishikawa T."/>
            <person name="Otsuki T."/>
            <person name="Sugiyama T."/>
            <person name="Irie R."/>
            <person name="Wakamatsu A."/>
            <person name="Hayashi K."/>
            <person name="Sato H."/>
            <person name="Nagai K."/>
            <person name="Kimura K."/>
            <person name="Makita H."/>
            <person name="Sekine M."/>
            <person name="Obayashi M."/>
            <person name="Nishi T."/>
            <person name="Shibahara T."/>
            <person name="Tanaka T."/>
            <person name="Ishii S."/>
            <person name="Yamamoto J."/>
            <person name="Saito K."/>
            <person name="Kawai Y."/>
            <person name="Isono Y."/>
            <person name="Nakamura Y."/>
            <person name="Nagahari K."/>
            <person name="Murakami K."/>
            <person name="Yasuda T."/>
            <person name="Iwayanagi T."/>
            <person name="Wagatsuma M."/>
            <person name="Shiratori A."/>
            <person name="Sudo H."/>
            <person name="Hosoiri T."/>
            <person name="Kaku Y."/>
            <person name="Kodaira H."/>
            <person name="Kondo H."/>
            <person name="Sugawara M."/>
            <person name="Takahashi M."/>
            <person name="Kanda K."/>
            <person name="Yokoi T."/>
            <person name="Furuya T."/>
            <person name="Kikkawa E."/>
            <person name="Omura Y."/>
            <person name="Abe K."/>
            <person name="Kamihara K."/>
            <person name="Katsuta N."/>
            <person name="Sato K."/>
            <person name="Tanikawa M."/>
            <person name="Yamazaki M."/>
            <person name="Ninomiya K."/>
            <person name="Ishibashi T."/>
            <person name="Yamashita H."/>
            <person name="Murakawa K."/>
            <person name="Fujimori K."/>
            <person name="Tanai H."/>
            <person name="Kimata M."/>
            <person name="Watanabe M."/>
            <person name="Hiraoka S."/>
            <person name="Chiba Y."/>
            <person name="Ishida S."/>
            <person name="Ono Y."/>
            <person name="Takiguchi S."/>
            <person name="Watanabe S."/>
            <person name="Yosida M."/>
            <person name="Hotuta T."/>
            <person name="Kusano J."/>
            <person name="Kanehori K."/>
            <person name="Takahashi-Fujii A."/>
            <person name="Hara H."/>
            <person name="Tanase T.-O."/>
            <person name="Nomura Y."/>
            <person name="Togiya S."/>
            <person name="Komai F."/>
            <person name="Hara R."/>
            <person name="Takeuchi K."/>
            <person name="Arita M."/>
            <person name="Imose N."/>
            <person name="Musashino K."/>
            <person name="Yuuki H."/>
            <person name="Oshima A."/>
            <person name="Sasaki N."/>
            <person name="Aotsuka S."/>
            <person name="Yoshikawa Y."/>
            <person name="Matsunawa H."/>
            <person name="Ichihara T."/>
            <person name="Shiohata N."/>
            <person name="Sano S."/>
            <person name="Moriya S."/>
            <person name="Momiyama H."/>
            <person name="Satoh N."/>
            <person name="Takami S."/>
            <person name="Terashima Y."/>
            <person name="Suzuki O."/>
            <person name="Nakagawa S."/>
            <person name="Senoh A."/>
            <person name="Mizoguchi H."/>
            <person name="Goto Y."/>
            <person name="Shimizu F."/>
            <person name="Wakebe H."/>
            <person name="Hishigaki H."/>
            <person name="Watanabe T."/>
            <person name="Sugiyama A."/>
            <person name="Takemoto M."/>
            <person name="Kawakami B."/>
            <person name="Yamazaki M."/>
            <person name="Watanabe K."/>
            <person name="Kumagai A."/>
            <person name="Itakura S."/>
            <person name="Fukuzumi Y."/>
            <person name="Fujimori Y."/>
            <person name="Komiyama M."/>
            <person name="Tashiro H."/>
            <person name="Tanigami A."/>
            <person name="Fujiwara T."/>
            <person name="Ono T."/>
            <person name="Yamada K."/>
            <person name="Fujii Y."/>
            <person name="Ozaki K."/>
            <person name="Hirao M."/>
            <person name="Ohmori Y."/>
            <person name="Kawabata A."/>
            <person name="Hikiji T."/>
            <person name="Kobatake N."/>
            <person name="Inagaki H."/>
            <person name="Ikema Y."/>
            <person name="Okamoto S."/>
            <person name="Okitani R."/>
            <person name="Kawakami T."/>
            <person name="Noguchi S."/>
            <person name="Itoh T."/>
            <person name="Shigeta K."/>
            <person name="Senba T."/>
            <person name="Matsumura K."/>
            <person name="Nakajima Y."/>
            <person name="Mizuno T."/>
            <person name="Morinaga M."/>
            <person name="Sasaki M."/>
            <person name="Togashi T."/>
            <person name="Oyama M."/>
            <person name="Hata H."/>
            <person name="Watanabe M."/>
            <person name="Komatsu T."/>
            <person name="Mizushima-Sugano J."/>
            <person name="Satoh T."/>
            <person name="Shirai Y."/>
            <person name="Takahashi Y."/>
            <person name="Nakagawa K."/>
            <person name="Okumura K."/>
            <person name="Nagase T."/>
            <person name="Nomura N."/>
            <person name="Kikuchi H."/>
            <person name="Masuho Y."/>
            <person name="Yamashita R."/>
            <person name="Nakai K."/>
            <person name="Yada T."/>
            <person name="Nakamura Y."/>
            <person name="Ohara O."/>
            <person name="Isogai T."/>
            <person name="Sugano S."/>
        </authorList>
    </citation>
    <scope>NUCLEOTIDE SEQUENCE [LARGE SCALE MRNA] (ISOFORMS 1 AND 2)</scope>
    <source>
        <tissue>Cerebellum</tissue>
        <tissue>Trachea</tissue>
    </source>
</reference>
<reference key="4">
    <citation type="journal article" date="2006" name="Nature">
        <title>The DNA sequence and biological annotation of human chromosome 1.</title>
        <authorList>
            <person name="Gregory S.G."/>
            <person name="Barlow K.F."/>
            <person name="McLay K.E."/>
            <person name="Kaul R."/>
            <person name="Swarbreck D."/>
            <person name="Dunham A."/>
            <person name="Scott C.E."/>
            <person name="Howe K.L."/>
            <person name="Woodfine K."/>
            <person name="Spencer C.C.A."/>
            <person name="Jones M.C."/>
            <person name="Gillson C."/>
            <person name="Searle S."/>
            <person name="Zhou Y."/>
            <person name="Kokocinski F."/>
            <person name="McDonald L."/>
            <person name="Evans R."/>
            <person name="Phillips K."/>
            <person name="Atkinson A."/>
            <person name="Cooper R."/>
            <person name="Jones C."/>
            <person name="Hall R.E."/>
            <person name="Andrews T.D."/>
            <person name="Lloyd C."/>
            <person name="Ainscough R."/>
            <person name="Almeida J.P."/>
            <person name="Ambrose K.D."/>
            <person name="Anderson F."/>
            <person name="Andrew R.W."/>
            <person name="Ashwell R.I.S."/>
            <person name="Aubin K."/>
            <person name="Babbage A.K."/>
            <person name="Bagguley C.L."/>
            <person name="Bailey J."/>
            <person name="Beasley H."/>
            <person name="Bethel G."/>
            <person name="Bird C.P."/>
            <person name="Bray-Allen S."/>
            <person name="Brown J.Y."/>
            <person name="Brown A.J."/>
            <person name="Buckley D."/>
            <person name="Burton J."/>
            <person name="Bye J."/>
            <person name="Carder C."/>
            <person name="Chapman J.C."/>
            <person name="Clark S.Y."/>
            <person name="Clarke G."/>
            <person name="Clee C."/>
            <person name="Cobley V."/>
            <person name="Collier R.E."/>
            <person name="Corby N."/>
            <person name="Coville G.J."/>
            <person name="Davies J."/>
            <person name="Deadman R."/>
            <person name="Dunn M."/>
            <person name="Earthrowl M."/>
            <person name="Ellington A.G."/>
            <person name="Errington H."/>
            <person name="Frankish A."/>
            <person name="Frankland J."/>
            <person name="French L."/>
            <person name="Garner P."/>
            <person name="Garnett J."/>
            <person name="Gay L."/>
            <person name="Ghori M.R.J."/>
            <person name="Gibson R."/>
            <person name="Gilby L.M."/>
            <person name="Gillett W."/>
            <person name="Glithero R.J."/>
            <person name="Grafham D.V."/>
            <person name="Griffiths C."/>
            <person name="Griffiths-Jones S."/>
            <person name="Grocock R."/>
            <person name="Hammond S."/>
            <person name="Harrison E.S.I."/>
            <person name="Hart E."/>
            <person name="Haugen E."/>
            <person name="Heath P.D."/>
            <person name="Holmes S."/>
            <person name="Holt K."/>
            <person name="Howden P.J."/>
            <person name="Hunt A.R."/>
            <person name="Hunt S.E."/>
            <person name="Hunter G."/>
            <person name="Isherwood J."/>
            <person name="James R."/>
            <person name="Johnson C."/>
            <person name="Johnson D."/>
            <person name="Joy A."/>
            <person name="Kay M."/>
            <person name="Kershaw J.K."/>
            <person name="Kibukawa M."/>
            <person name="Kimberley A.M."/>
            <person name="King A."/>
            <person name="Knights A.J."/>
            <person name="Lad H."/>
            <person name="Laird G."/>
            <person name="Lawlor S."/>
            <person name="Leongamornlert D.A."/>
            <person name="Lloyd D.M."/>
            <person name="Loveland J."/>
            <person name="Lovell J."/>
            <person name="Lush M.J."/>
            <person name="Lyne R."/>
            <person name="Martin S."/>
            <person name="Mashreghi-Mohammadi M."/>
            <person name="Matthews L."/>
            <person name="Matthews N.S.W."/>
            <person name="McLaren S."/>
            <person name="Milne S."/>
            <person name="Mistry S."/>
            <person name="Moore M.J.F."/>
            <person name="Nickerson T."/>
            <person name="O'Dell C.N."/>
            <person name="Oliver K."/>
            <person name="Palmeiri A."/>
            <person name="Palmer S.A."/>
            <person name="Parker A."/>
            <person name="Patel D."/>
            <person name="Pearce A.V."/>
            <person name="Peck A.I."/>
            <person name="Pelan S."/>
            <person name="Phelps K."/>
            <person name="Phillimore B.J."/>
            <person name="Plumb R."/>
            <person name="Rajan J."/>
            <person name="Raymond C."/>
            <person name="Rouse G."/>
            <person name="Saenphimmachak C."/>
            <person name="Sehra H.K."/>
            <person name="Sheridan E."/>
            <person name="Shownkeen R."/>
            <person name="Sims S."/>
            <person name="Skuce C.D."/>
            <person name="Smith M."/>
            <person name="Steward C."/>
            <person name="Subramanian S."/>
            <person name="Sycamore N."/>
            <person name="Tracey A."/>
            <person name="Tromans A."/>
            <person name="Van Helmond Z."/>
            <person name="Wall M."/>
            <person name="Wallis J.M."/>
            <person name="White S."/>
            <person name="Whitehead S.L."/>
            <person name="Wilkinson J.E."/>
            <person name="Willey D.L."/>
            <person name="Williams H."/>
            <person name="Wilming L."/>
            <person name="Wray P.W."/>
            <person name="Wu Z."/>
            <person name="Coulson A."/>
            <person name="Vaudin M."/>
            <person name="Sulston J.E."/>
            <person name="Durbin R.M."/>
            <person name="Hubbard T."/>
            <person name="Wooster R."/>
            <person name="Dunham I."/>
            <person name="Carter N.P."/>
            <person name="McVean G."/>
            <person name="Ross M.T."/>
            <person name="Harrow J."/>
            <person name="Olson M.V."/>
            <person name="Beck S."/>
            <person name="Rogers J."/>
            <person name="Bentley D.R."/>
        </authorList>
    </citation>
    <scope>NUCLEOTIDE SEQUENCE [LARGE SCALE GENOMIC DNA]</scope>
</reference>
<reference key="5">
    <citation type="submission" date="2005-09" db="EMBL/GenBank/DDBJ databases">
        <authorList>
            <person name="Mural R.J."/>
            <person name="Istrail S."/>
            <person name="Sutton G.G."/>
            <person name="Florea L."/>
            <person name="Halpern A.L."/>
            <person name="Mobarry C.M."/>
            <person name="Lippert R."/>
            <person name="Walenz B."/>
            <person name="Shatkay H."/>
            <person name="Dew I."/>
            <person name="Miller J.R."/>
            <person name="Flanigan M.J."/>
            <person name="Edwards N.J."/>
            <person name="Bolanos R."/>
            <person name="Fasulo D."/>
            <person name="Halldorsson B.V."/>
            <person name="Hannenhalli S."/>
            <person name="Turner R."/>
            <person name="Yooseph S."/>
            <person name="Lu F."/>
            <person name="Nusskern D.R."/>
            <person name="Shue B.C."/>
            <person name="Zheng X.H."/>
            <person name="Zhong F."/>
            <person name="Delcher A.L."/>
            <person name="Huson D.H."/>
            <person name="Kravitz S.A."/>
            <person name="Mouchard L."/>
            <person name="Reinert K."/>
            <person name="Remington K.A."/>
            <person name="Clark A.G."/>
            <person name="Waterman M.S."/>
            <person name="Eichler E.E."/>
            <person name="Adams M.D."/>
            <person name="Hunkapiller M.W."/>
            <person name="Myers E.W."/>
            <person name="Venter J.C."/>
        </authorList>
    </citation>
    <scope>NUCLEOTIDE SEQUENCE [LARGE SCALE GENOMIC DNA]</scope>
</reference>
<reference key="6">
    <citation type="journal article" date="2004" name="Genome Res.">
        <title>The status, quality, and expansion of the NIH full-length cDNA project: the Mammalian Gene Collection (MGC).</title>
        <authorList>
            <consortium name="The MGC Project Team"/>
        </authorList>
    </citation>
    <scope>NUCLEOTIDE SEQUENCE [LARGE SCALE MRNA] (ISOFORM 1)</scope>
    <source>
        <tissue>Liver</tissue>
    </source>
</reference>
<reference key="7">
    <citation type="journal article" date="2000" name="Mol. Biol. Cell">
        <title>Gaa1p and gpi8p are components of a glycosylphosphatidylinositol (GPI) transamidase that mediates attachment of GPI to proteins.</title>
        <authorList>
            <person name="Ohishi K."/>
            <person name="Inoue N."/>
            <person name="Maeda Y."/>
            <person name="Takeda J."/>
            <person name="Riezman H."/>
            <person name="Kinoshita T."/>
        </authorList>
    </citation>
    <scope>FUNCTION</scope>
    <scope>ACTIVE SITE</scope>
    <scope>INTERACTION WITH GPAA1</scope>
    <scope>MUTAGENESIS OF CYS-92; HIS-164; CYS-206 AND 311-GLU--PHE-395</scope>
</reference>
<reference key="8">
    <citation type="journal article" date="2001" name="EMBO J.">
        <title>PIG-S and PIG-T, essential for GPI anchor attachment to proteins, form a complex with GAA1 and GPI8.</title>
        <authorList>
            <person name="Ohishi K."/>
            <person name="Inoue N."/>
            <person name="Kinoshita T."/>
        </authorList>
    </citation>
    <scope>PROTEIN SEQUENCE OF 28-47</scope>
    <scope>FUNCTION</scope>
    <scope>SUBUNIT</scope>
</reference>
<reference key="9">
    <citation type="journal article" date="2003" name="J. Biol. Chem.">
        <title>Two subunits of glycosylphosphatidylinositol transamidase, GPI8 and PIG-T, form a functionally important intermolecular disulfide bridge.</title>
        <authorList>
            <person name="Ohishi K."/>
            <person name="Nagamune K."/>
            <person name="Maeda Y."/>
            <person name="Kinoshita T."/>
        </authorList>
    </citation>
    <scope>FUNCTION</scope>
    <scope>SUBUNIT</scope>
    <scope>DISULFIDE BOND FORMATION WITH PIGT</scope>
    <scope>MUTAGENESIS OF CYS-92</scope>
</reference>
<reference key="10">
    <citation type="journal article" date="2011" name="BMC Syst. Biol.">
        <title>Initial characterization of the human central proteome.</title>
        <authorList>
            <person name="Burkard T.R."/>
            <person name="Planyavsky M."/>
            <person name="Kaupe I."/>
            <person name="Breitwieser F.P."/>
            <person name="Buerckstuemmer T."/>
            <person name="Bennett K.L."/>
            <person name="Superti-Furga G."/>
            <person name="Colinge J."/>
        </authorList>
    </citation>
    <scope>IDENTIFICATION BY MASS SPECTROMETRY [LARGE SCALE ANALYSIS]</scope>
</reference>
<reference key="11">
    <citation type="journal article" date="2015" name="Proteomics">
        <title>N-terminome analysis of the human mitochondrial proteome.</title>
        <authorList>
            <person name="Vaca Jacome A.S."/>
            <person name="Rabilloud T."/>
            <person name="Schaeffer-Reiss C."/>
            <person name="Rompais M."/>
            <person name="Ayoub D."/>
            <person name="Lane L."/>
            <person name="Bairoch A."/>
            <person name="Van Dorsselaer A."/>
            <person name="Carapito C."/>
        </authorList>
    </citation>
    <scope>CLEAVAGE OF SIGNAL PEPTIDE [LARGE SCALE ANALYSIS] AFTER ALA-27</scope>
    <scope>IDENTIFICATION BY MASS SPECTROMETRY [LARGE SCALE ANALYSIS]</scope>
</reference>
<reference key="12">
    <citation type="journal article" date="2020" name="Am. J. Hum. Genet.">
        <title>Bi-allelic variants in the GPI transamidase subunit PIGK cause a neurodevelopmental syndrome with hypotonia, cerebellar atrophy, and epilepsy.</title>
        <authorList>
            <person name="Nguyen T.T.M."/>
            <person name="Murakami Y."/>
            <person name="Mobilio S."/>
            <person name="Niceta M."/>
            <person name="Zampino G."/>
            <person name="Philippe C."/>
            <person name="Moutton S."/>
            <person name="Zaki M.S."/>
            <person name="James K.N."/>
            <person name="Musaev D."/>
            <person name="Mu W."/>
            <person name="Baranano K."/>
            <person name="Nance J.R."/>
            <person name="Rosenfeld J.A."/>
            <person name="Braverman N."/>
            <person name="Ciolfi A."/>
            <person name="Millan F."/>
            <person name="Person R.E."/>
            <person name="Bruel A.L."/>
            <person name="Thauvin-Robinet C."/>
            <person name="Ververi A."/>
            <person name="DeVile C."/>
            <person name="Male A."/>
            <person name="Efthymiou S."/>
            <person name="Maroofian R."/>
            <person name="Houlden H."/>
            <person name="Maqbool S."/>
            <person name="Rahman F."/>
            <person name="Baratang N.V."/>
            <person name="Rousseau J."/>
            <person name="St-Denis A."/>
            <person name="Elrick M.J."/>
            <person name="Anselm I."/>
            <person name="Rodan L.H."/>
            <person name="Tartaglia M."/>
            <person name="Gleeson J."/>
            <person name="Kinoshita T."/>
            <person name="Campeau P.M."/>
        </authorList>
    </citation>
    <scope>INVOLVEMENT IN NEDHCAS</scope>
    <scope>VARIANTS NEDHCAS 33-GLN--PHE-395 DEL; PHE-53; PRO-86; VAL-87; ASN-88; SER-160; VAL-184; LYS-246 AND ARG-275</scope>
</reference>
<reference key="13">
    <citation type="journal article" date="2021" name="Molecules">
        <title>Functional analysis of the GPI transamidase complex by screening for amino acid mutations in each subunit.</title>
        <authorList>
            <person name="Liu S.S."/>
            <person name="Jin F."/>
            <person name="Liu Y.S."/>
            <person name="Murakami Y."/>
            <person name="Sugita Y."/>
            <person name="Kato T."/>
            <person name="Gao X.D."/>
            <person name="Kinoshita T."/>
            <person name="Hattori M."/>
            <person name="Fujita M."/>
        </authorList>
    </citation>
    <scope>SUBUNIT</scope>
    <scope>MUTAGENESIS OF ARG-54; ASN-58; ARG-60; HIS-61; ARG-74; ASP-79; CYS-92; GLU-118; GLU-125; GLU-129; TYR-160; HIS-164; ASP-174; GLU-198; ASP-204; CYS-206; GLU-230; ASP-231; SER-232; ASP-238; HIS-244; ASP-247; ASP-289 AND ASP-302</scope>
    <scope>FUNCTION</scope>
</reference>
<reference evidence="21" key="14">
    <citation type="journal article" date="2022" name="Nat. Commun.">
        <title>Molecular insights into biogenesis of glycosylphosphatidylinositol anchor proteins.</title>
        <authorList>
            <person name="Xu Y."/>
            <person name="Jia G."/>
            <person name="Li T."/>
            <person name="Zhou Z."/>
            <person name="Luo Y."/>
            <person name="Chao Y."/>
            <person name="Bao J."/>
            <person name="Su Z."/>
            <person name="Qu Q."/>
            <person name="Li D."/>
        </authorList>
    </citation>
    <scope>STRUCTURE BY ELECTRON MICROSCOPY (2.53 ANGSTROMS) OF 2-395 IN COMPLEX WITH CALCIUM; GPAA1; PIGS; PIGT AND PIGU</scope>
    <scope>IDENTIFICATION OF THE GPI-ANCHOR TRANSAMIDASE COMPLEX</scope>
    <scope>FUNCTION</scope>
    <scope>CATALYTIC ACTIVITY</scope>
    <scope>TOPOLOGY</scope>
    <scope>SUBUNIT</scope>
    <scope>DISULFIDE BOND</scope>
    <scope>MUTAGENESIS OF ARG-60; CYS-92; HIS-164; ASP-204; CYS-206 AND ASP-247</scope>
</reference>
<reference evidence="20" key="15">
    <citation type="journal article" date="2022" name="Nat. Struct. Mol. Biol.">
        <title>Structure of human glycosylphosphatidylinositol transamidase.</title>
        <authorList>
            <person name="Zhang H."/>
            <person name="Su J."/>
            <person name="Li B."/>
            <person name="Gao Y."/>
            <person name="Liu M."/>
            <person name="He L."/>
            <person name="Xu H."/>
            <person name="Dong Y."/>
            <person name="Zhang X.C."/>
            <person name="Zhao Y."/>
        </authorList>
    </citation>
    <scope>STRUCTURE BY ELECTRON MICROSCOPY (3.10 ANGSTROMS) IN COMPLEX WITH CALCIUM; GPAA1; PIGS; PIGT AND PIGU</scope>
    <scope>DISULFIDE BONDS</scope>
    <scope>IDENTIFICATION OF THE GPI-ANCHOR TRANSAMIDASE COMPLEX</scope>
    <scope>DISULFIDE BOND</scope>
    <scope>TOPOLOGY</scope>
    <scope>FUNCTION</scope>
    <scope>CATALYTIC ACTIVITY</scope>
    <scope>MUTAGENESIS OF ASN-58; ASP-120; HIS-164 AND CYS-206</scope>
</reference>
<reference evidence="22 23" key="16">
    <citation type="journal article" date="2023" name="Nat. Commun.">
        <title>Structures of liganded glycosylphosphatidylinositol transamidase illuminate GPI-AP biogenesis.</title>
        <authorList>
            <person name="Xu Y."/>
            <person name="Li T."/>
            <person name="Zhou Z."/>
            <person name="Hong J."/>
            <person name="Chao Y."/>
            <person name="Zhu Z."/>
            <person name="Zhang Y."/>
            <person name="Qu Q."/>
            <person name="Li D."/>
        </authorList>
    </citation>
    <scope>STRUCTURE BY ELECTRON MICROSCOPY (2.85 ANGSTROMS) OF 2-395 IN COMPLEX WITH CALCIUM; ULBP2; GPAA1; PIGS; PIGT AND PIGU</scope>
    <scope>DISULFIDE BONDS</scope>
    <scope>IDENTIFICATION OF THE GPI-ANCHOR TRANSAMIDASE COMPLEX</scope>
    <scope>FUNCTION</scope>
    <scope>CATALYTIC ACTIVITY</scope>
    <scope>REACTION MECHANISM</scope>
    <scope>ACTIVE SITE</scope>
    <scope>REGION</scope>
    <scope>ACTIVITY REGULATION</scope>
</reference>
<sequence>MAVTDSLSRAATVLATVLLLSFGSVAASHIEDQAEQFFRSGHTNNWAVLVCTSRFWFNYRHVANTLSVYRSVKRLGIPDSHIVLMLADDMACNPRNPKPATVFSHKNMELNVYGDDVEVDYRSYEVTVENFLRVLTGRIPPSTPRSKRLLSDDRSNILIYMTGHGGNGFLKFQDSEEITNIELADAFEQMWQKRRYNELLFIIDTCQGASMYERFYSPNIMALASSQVGEDSLSHQPDPAIGVHLMDRYTFYVLEFLEEINPASQTNMNDLFQVCPKSLCVSTPGHRTDLFQRDPKNVLITDFFGSVRKVEITTETIKLQQDSEIMESSYKEDQMDEKLMEPLKYAEQLPVAQIIHQKPKLKDWHPPGGFILGLWALIIMVFFKTYGIKHMKFIF</sequence>
<organism>
    <name type="scientific">Homo sapiens</name>
    <name type="common">Human</name>
    <dbReference type="NCBI Taxonomy" id="9606"/>
    <lineage>
        <taxon>Eukaryota</taxon>
        <taxon>Metazoa</taxon>
        <taxon>Chordata</taxon>
        <taxon>Craniata</taxon>
        <taxon>Vertebrata</taxon>
        <taxon>Euteleostomi</taxon>
        <taxon>Mammalia</taxon>
        <taxon>Eutheria</taxon>
        <taxon>Euarchontoglires</taxon>
        <taxon>Primates</taxon>
        <taxon>Haplorrhini</taxon>
        <taxon>Catarrhini</taxon>
        <taxon>Hominidae</taxon>
        <taxon>Homo</taxon>
    </lineage>
</organism>
<dbReference type="EC" id="2.6.1.-" evidence="7"/>
<dbReference type="EMBL" id="Y07596">
    <property type="protein sequence ID" value="CAA68871.1"/>
    <property type="molecule type" value="mRNA"/>
</dbReference>
<dbReference type="EMBL" id="AF022913">
    <property type="protein sequence ID" value="AAB81597.1"/>
    <property type="molecule type" value="mRNA"/>
</dbReference>
<dbReference type="EMBL" id="AK304340">
    <property type="protein sequence ID" value="BAG65185.1"/>
    <property type="molecule type" value="mRNA"/>
</dbReference>
<dbReference type="EMBL" id="AK313015">
    <property type="protein sequence ID" value="BAG35850.1"/>
    <property type="molecule type" value="mRNA"/>
</dbReference>
<dbReference type="EMBL" id="AC093433">
    <property type="status" value="NOT_ANNOTATED_CDS"/>
    <property type="molecule type" value="Genomic_DNA"/>
</dbReference>
<dbReference type="EMBL" id="AC113935">
    <property type="status" value="NOT_ANNOTATED_CDS"/>
    <property type="molecule type" value="Genomic_DNA"/>
</dbReference>
<dbReference type="EMBL" id="AL035409">
    <property type="status" value="NOT_ANNOTATED_CDS"/>
    <property type="molecule type" value="Genomic_DNA"/>
</dbReference>
<dbReference type="EMBL" id="CH471059">
    <property type="protein sequence ID" value="EAX06380.1"/>
    <property type="molecule type" value="Genomic_DNA"/>
</dbReference>
<dbReference type="EMBL" id="BC020737">
    <property type="protein sequence ID" value="AAH20737.1"/>
    <property type="molecule type" value="mRNA"/>
</dbReference>
<dbReference type="CCDS" id="CCDS674.1">
    <molecule id="Q92643-1"/>
</dbReference>
<dbReference type="RefSeq" id="NP_005473.1">
    <molecule id="Q92643-1"/>
    <property type="nucleotide sequence ID" value="NM_005482.3"/>
</dbReference>
<dbReference type="PDB" id="7W72">
    <property type="method" value="EM"/>
    <property type="resolution" value="3.10 A"/>
    <property type="chains" value="K=1-395"/>
</dbReference>
<dbReference type="PDB" id="7WLD">
    <property type="method" value="EM"/>
    <property type="resolution" value="2.53 A"/>
    <property type="chains" value="K=2-395"/>
</dbReference>
<dbReference type="PDB" id="8IMX">
    <property type="method" value="EM"/>
    <property type="resolution" value="2.85 A"/>
    <property type="chains" value="K=2-395"/>
</dbReference>
<dbReference type="PDB" id="8IMY">
    <property type="method" value="EM"/>
    <property type="resolution" value="3.22 A"/>
    <property type="chains" value="K=2-395"/>
</dbReference>
<dbReference type="PDBsum" id="7W72"/>
<dbReference type="PDBsum" id="7WLD"/>
<dbReference type="PDBsum" id="8IMX"/>
<dbReference type="PDBsum" id="8IMY"/>
<dbReference type="EMDB" id="EMD-32336"/>
<dbReference type="EMDB" id="EMD-32582"/>
<dbReference type="SMR" id="Q92643"/>
<dbReference type="BioGRID" id="115343">
    <property type="interactions" value="116"/>
</dbReference>
<dbReference type="ComplexPortal" id="CPX-6503">
    <property type="entry name" value="GPI-anchor transamidase complex"/>
</dbReference>
<dbReference type="CORUM" id="Q92643"/>
<dbReference type="FunCoup" id="Q92643">
    <property type="interactions" value="1429"/>
</dbReference>
<dbReference type="IntAct" id="Q92643">
    <property type="interactions" value="47"/>
</dbReference>
<dbReference type="MINT" id="Q92643"/>
<dbReference type="STRING" id="9606.ENSP00000359848"/>
<dbReference type="MEROPS" id="C13.005"/>
<dbReference type="GlyGen" id="Q92643">
    <property type="glycosylation" value="4 sites, 1 O-linked glycan (3 sites)"/>
</dbReference>
<dbReference type="iPTMnet" id="Q92643"/>
<dbReference type="PhosphoSitePlus" id="Q92643"/>
<dbReference type="SwissPalm" id="Q92643"/>
<dbReference type="BioMuta" id="PIGK"/>
<dbReference type="DMDM" id="22001630"/>
<dbReference type="jPOST" id="Q92643"/>
<dbReference type="MassIVE" id="Q92643"/>
<dbReference type="PaxDb" id="9606-ENSP00000359848"/>
<dbReference type="PeptideAtlas" id="Q92643"/>
<dbReference type="ProteomicsDB" id="5832"/>
<dbReference type="ProteomicsDB" id="75395">
    <molecule id="Q92643-1"/>
</dbReference>
<dbReference type="Pumba" id="Q92643"/>
<dbReference type="Antibodypedia" id="33483">
    <property type="antibodies" value="176 antibodies from 22 providers"/>
</dbReference>
<dbReference type="DNASU" id="10026"/>
<dbReference type="Ensembl" id="ENST00000370812.8">
    <molecule id="Q92643-1"/>
    <property type="protein sequence ID" value="ENSP00000359848.3"/>
    <property type="gene ID" value="ENSG00000142892.15"/>
</dbReference>
<dbReference type="GeneID" id="10026"/>
<dbReference type="KEGG" id="hsa:10026"/>
<dbReference type="MANE-Select" id="ENST00000370812.8">
    <property type="protein sequence ID" value="ENSP00000359848.3"/>
    <property type="RefSeq nucleotide sequence ID" value="NM_005482.3"/>
    <property type="RefSeq protein sequence ID" value="NP_005473.1"/>
</dbReference>
<dbReference type="UCSC" id="uc001dhk.4">
    <molecule id="Q92643-1"/>
    <property type="organism name" value="human"/>
</dbReference>
<dbReference type="AGR" id="HGNC:8965"/>
<dbReference type="CTD" id="10026"/>
<dbReference type="DisGeNET" id="10026"/>
<dbReference type="GeneCards" id="PIGK"/>
<dbReference type="HGNC" id="HGNC:8965">
    <property type="gene designation" value="PIGK"/>
</dbReference>
<dbReference type="HPA" id="ENSG00000142892">
    <property type="expression patterns" value="Low tissue specificity"/>
</dbReference>
<dbReference type="MalaCards" id="PIGK"/>
<dbReference type="MIM" id="605087">
    <property type="type" value="gene"/>
</dbReference>
<dbReference type="MIM" id="618879">
    <property type="type" value="phenotype"/>
</dbReference>
<dbReference type="neXtProt" id="NX_Q92643"/>
<dbReference type="OpenTargets" id="ENSG00000142892"/>
<dbReference type="PharmGKB" id="PA33296"/>
<dbReference type="VEuPathDB" id="HostDB:ENSG00000142892"/>
<dbReference type="eggNOG" id="KOG1349">
    <property type="taxonomic scope" value="Eukaryota"/>
</dbReference>
<dbReference type="GeneTree" id="ENSGT00940000156273"/>
<dbReference type="InParanoid" id="Q92643"/>
<dbReference type="OMA" id="VMESQFP"/>
<dbReference type="OrthoDB" id="192611at2759"/>
<dbReference type="PAN-GO" id="Q92643">
    <property type="GO annotations" value="4 GO annotations based on evolutionary models"/>
</dbReference>
<dbReference type="PhylomeDB" id="Q92643"/>
<dbReference type="TreeFam" id="TF300848"/>
<dbReference type="PathwayCommons" id="Q92643"/>
<dbReference type="Reactome" id="R-HSA-162791">
    <property type="pathway name" value="Attachment of GPI anchor to uPAR"/>
</dbReference>
<dbReference type="SignaLink" id="Q92643"/>
<dbReference type="SIGNOR" id="Q92643"/>
<dbReference type="UniPathway" id="UPA00196"/>
<dbReference type="BioGRID-ORCS" id="10026">
    <property type="hits" value="35 hits in 1155 CRISPR screens"/>
</dbReference>
<dbReference type="ChiTaRS" id="PIGK">
    <property type="organism name" value="human"/>
</dbReference>
<dbReference type="GeneWiki" id="PIGK"/>
<dbReference type="GenomeRNAi" id="10026"/>
<dbReference type="Pharos" id="Q92643">
    <property type="development level" value="Tbio"/>
</dbReference>
<dbReference type="PRO" id="PR:Q92643"/>
<dbReference type="Proteomes" id="UP000005640">
    <property type="component" value="Chromosome 1"/>
</dbReference>
<dbReference type="RNAct" id="Q92643">
    <property type="molecule type" value="protein"/>
</dbReference>
<dbReference type="Bgee" id="ENSG00000142892">
    <property type="expression patterns" value="Expressed in endothelial cell and 198 other cell types or tissues"/>
</dbReference>
<dbReference type="ExpressionAtlas" id="Q92643">
    <property type="expression patterns" value="baseline and differential"/>
</dbReference>
<dbReference type="GO" id="GO:0005789">
    <property type="term" value="C:endoplasmic reticulum membrane"/>
    <property type="evidence" value="ECO:0000304"/>
    <property type="project" value="Reactome"/>
</dbReference>
<dbReference type="GO" id="GO:0042765">
    <property type="term" value="C:GPI-anchor transamidase complex"/>
    <property type="evidence" value="ECO:0000314"/>
    <property type="project" value="UniProtKB"/>
</dbReference>
<dbReference type="GO" id="GO:0016020">
    <property type="term" value="C:membrane"/>
    <property type="evidence" value="ECO:0007005"/>
    <property type="project" value="UniProtKB"/>
</dbReference>
<dbReference type="GO" id="GO:0003923">
    <property type="term" value="F:GPI-anchor transamidase activity"/>
    <property type="evidence" value="ECO:0000314"/>
    <property type="project" value="UniProtKB"/>
</dbReference>
<dbReference type="GO" id="GO:0016255">
    <property type="term" value="P:attachment of GPI anchor to protein"/>
    <property type="evidence" value="ECO:0000314"/>
    <property type="project" value="UniProtKB"/>
</dbReference>
<dbReference type="GO" id="GO:0006506">
    <property type="term" value="P:GPI anchor biosynthetic process"/>
    <property type="evidence" value="ECO:0007669"/>
    <property type="project" value="UniProtKB-UniPathway"/>
</dbReference>
<dbReference type="GO" id="GO:0180046">
    <property type="term" value="P:GPI anchored protein biosynthesis"/>
    <property type="evidence" value="ECO:0000314"/>
    <property type="project" value="UniProtKB"/>
</dbReference>
<dbReference type="GO" id="GO:0006508">
    <property type="term" value="P:proteolysis"/>
    <property type="evidence" value="ECO:0007669"/>
    <property type="project" value="UniProtKB-KW"/>
</dbReference>
<dbReference type="FunFam" id="3.40.50.1460:FF:000002">
    <property type="entry name" value="GPI-anchor transamidase"/>
    <property type="match status" value="1"/>
</dbReference>
<dbReference type="Gene3D" id="3.40.50.1460">
    <property type="match status" value="1"/>
</dbReference>
<dbReference type="InterPro" id="IPR028361">
    <property type="entry name" value="GPI_transamidase"/>
</dbReference>
<dbReference type="InterPro" id="IPR001096">
    <property type="entry name" value="Peptidase_C13"/>
</dbReference>
<dbReference type="PANTHER" id="PTHR48067">
    <property type="entry name" value="GPI-ANCHOR TRANSAMIDASE"/>
    <property type="match status" value="1"/>
</dbReference>
<dbReference type="PANTHER" id="PTHR48067:SF1">
    <property type="entry name" value="GPI-ANCHOR TRANSAMIDASE"/>
    <property type="match status" value="1"/>
</dbReference>
<dbReference type="Pfam" id="PF01650">
    <property type="entry name" value="Peptidase_C13"/>
    <property type="match status" value="1"/>
</dbReference>
<dbReference type="PIRSF" id="PIRSF500138">
    <property type="entry name" value="GPI8"/>
    <property type="match status" value="1"/>
</dbReference>
<dbReference type="PIRSF" id="PIRSF019663">
    <property type="entry name" value="Legumain"/>
    <property type="match status" value="1"/>
</dbReference>
<dbReference type="PRINTS" id="PR00776">
    <property type="entry name" value="HEMOGLOBNASE"/>
</dbReference>
<evidence type="ECO:0000269" key="1">
    <source>
    </source>
</evidence>
<evidence type="ECO:0000269" key="2">
    <source>
    </source>
</evidence>
<evidence type="ECO:0000269" key="3">
    <source>
    </source>
</evidence>
<evidence type="ECO:0000269" key="4">
    <source>
    </source>
</evidence>
<evidence type="ECO:0000269" key="5">
    <source>
    </source>
</evidence>
<evidence type="ECO:0000269" key="6">
    <source>
    </source>
</evidence>
<evidence type="ECO:0000269" key="7">
    <source>
    </source>
</evidence>
<evidence type="ECO:0000269" key="8">
    <source>
    </source>
</evidence>
<evidence type="ECO:0000269" key="9">
    <source>
    </source>
</evidence>
<evidence type="ECO:0000303" key="10">
    <source>
    </source>
</evidence>
<evidence type="ECO:0000303" key="11">
    <source>
    </source>
</evidence>
<evidence type="ECO:0000305" key="12"/>
<evidence type="ECO:0000305" key="13">
    <source>
    </source>
</evidence>
<evidence type="ECO:0000305" key="14">
    <source>
    </source>
</evidence>
<evidence type="ECO:0000305" key="15">
    <source>
    </source>
</evidence>
<evidence type="ECO:0000312" key="16">
    <source>
        <dbReference type="HGNC" id="HGNC:8965"/>
    </source>
</evidence>
<evidence type="ECO:0000312" key="17">
    <source>
        <dbReference type="PDB" id="7W72"/>
    </source>
</evidence>
<evidence type="ECO:0000312" key="18">
    <source>
        <dbReference type="PDB" id="7WLD"/>
    </source>
</evidence>
<evidence type="ECO:0000312" key="19">
    <source>
        <dbReference type="PDB" id="8IMX"/>
    </source>
</evidence>
<evidence type="ECO:0007744" key="20">
    <source>
        <dbReference type="PDB" id="7W72"/>
    </source>
</evidence>
<evidence type="ECO:0007744" key="21">
    <source>
        <dbReference type="PDB" id="7WLD"/>
    </source>
</evidence>
<evidence type="ECO:0007744" key="22">
    <source>
        <dbReference type="PDB" id="8IMX"/>
    </source>
</evidence>
<evidence type="ECO:0007744" key="23">
    <source>
        <dbReference type="PDB" id="8IMY"/>
    </source>
</evidence>
<evidence type="ECO:0007744" key="24">
    <source>
    </source>
</evidence>
<evidence type="ECO:0007829" key="25">
    <source>
        <dbReference type="PDB" id="7W72"/>
    </source>
</evidence>
<evidence type="ECO:0007829" key="26">
    <source>
        <dbReference type="PDB" id="7WLD"/>
    </source>
</evidence>
<evidence type="ECO:0007829" key="27">
    <source>
        <dbReference type="PDB" id="8IMX"/>
    </source>
</evidence>
<proteinExistence type="evidence at protein level"/>
<protein>
    <recommendedName>
        <fullName evidence="12">GPI-anchor transamidase</fullName>
        <ecNumber evidence="7">2.6.1.-</ecNumber>
    </recommendedName>
    <alternativeName>
        <fullName evidence="12">GPI-anchor transamidase component PIGK, catalytic subunit</fullName>
    </alternativeName>
    <alternativeName>
        <fullName>GPI8 homolog</fullName>
        <shortName evidence="11">hGPI8</shortName>
    </alternativeName>
    <alternativeName>
        <fullName>Phosphatidylinositol-glycan biosynthesis class K protein</fullName>
        <shortName>PIG-K</shortName>
    </alternativeName>
</protein>
<keyword id="KW-0002">3D-structure</keyword>
<keyword id="KW-0025">Alternative splicing</keyword>
<keyword id="KW-0903">Direct protein sequencing</keyword>
<keyword id="KW-0225">Disease variant</keyword>
<keyword id="KW-1015">Disulfide bond</keyword>
<keyword id="KW-0256">Endoplasmic reticulum</keyword>
<keyword id="KW-0887">Epilepsy</keyword>
<keyword id="KW-0337">GPI-anchor biosynthesis</keyword>
<keyword id="KW-0991">Intellectual disability</keyword>
<keyword id="KW-0472">Membrane</keyword>
<keyword id="KW-1267">Proteomics identification</keyword>
<keyword id="KW-1185">Reference proteome</keyword>
<keyword id="KW-0732">Signal</keyword>
<keyword id="KW-0808">Transferase</keyword>
<keyword id="KW-0812">Transmembrane</keyword>
<keyword id="KW-1133">Transmembrane helix</keyword>
<gene>
    <name evidence="16" type="primary">PIGK</name>
    <name evidence="11" type="synonym">GPI8</name>
</gene>
<name>GPI8_HUMAN</name>
<accession>Q92643</accession>
<accession>B2R7K3</accession>
<accession>B4E2M3</accession>
<accession>O14822</accession>
<accession>Q5TG77</accession>